<name>OAT_ARATH</name>
<accession>Q9FNK4</accession>
<reference key="1">
    <citation type="journal article" date="1998" name="Plant Physiol.">
        <title>Isolation of the ornithine-delta-aminotransferase cDNA and effect of salt stress on its expression in Arabidopsis thaliana.</title>
        <authorList>
            <person name="Roosens N.H."/>
            <person name="Thu T.T."/>
            <person name="Iskandar H.M."/>
            <person name="Jacobs M."/>
        </authorList>
    </citation>
    <scope>NUCLEOTIDE SEQUENCE [MRNA]</scope>
    <scope>BIOPHYSICOCHEMICAL PROPERTIES</scope>
    <scope>CATALYTIC ACTIVITY</scope>
    <scope>PATHWAY</scope>
    <scope>INDUCTION BY SALT</scope>
    <source>
        <strain>cv. Columbia</strain>
    </source>
</reference>
<reference key="2">
    <citation type="journal article" date="1997" name="DNA Res.">
        <title>Structural analysis of Arabidopsis thaliana chromosome 5. II. Sequence features of the regions of 1,044,062 bp covered by thirteen physically assigned P1 clones.</title>
        <authorList>
            <person name="Kotani H."/>
            <person name="Nakamura Y."/>
            <person name="Sato S."/>
            <person name="Kaneko T."/>
            <person name="Asamizu E."/>
            <person name="Miyajima N."/>
            <person name="Tabata S."/>
        </authorList>
    </citation>
    <scope>NUCLEOTIDE SEQUENCE [LARGE SCALE GENOMIC DNA]</scope>
    <source>
        <strain>cv. Columbia</strain>
    </source>
</reference>
<reference key="3">
    <citation type="journal article" date="2017" name="Plant J.">
        <title>Araport11: a complete reannotation of the Arabidopsis thaliana reference genome.</title>
        <authorList>
            <person name="Cheng C.Y."/>
            <person name="Krishnakumar V."/>
            <person name="Chan A.P."/>
            <person name="Thibaud-Nissen F."/>
            <person name="Schobel S."/>
            <person name="Town C.D."/>
        </authorList>
    </citation>
    <scope>GENOME REANNOTATION</scope>
    <source>
        <strain>cv. Columbia</strain>
    </source>
</reference>
<reference key="4">
    <citation type="submission" date="2005-05" db="EMBL/GenBank/DDBJ databases">
        <title>Arabidopsis ORF clones.</title>
        <authorList>
            <person name="Kim C.J."/>
            <person name="Chen H."/>
            <person name="Cheuk R."/>
            <person name="Shinn P."/>
            <person name="Ecker J.R."/>
        </authorList>
    </citation>
    <scope>NUCLEOTIDE SEQUENCE [LARGE SCALE MRNA]</scope>
    <source>
        <strain>cv. Columbia</strain>
    </source>
</reference>
<reference key="5">
    <citation type="submission" date="2006-10" db="EMBL/GenBank/DDBJ databases">
        <title>Arabidopsis ORF Clone.</title>
        <authorList>
            <person name="Bautista V.R."/>
            <person name="Kim C.J."/>
            <person name="Chen H."/>
            <person name="Quinitio C."/>
            <person name="Ecker J.R."/>
        </authorList>
    </citation>
    <scope>NUCLEOTIDE SEQUENCE [LARGE SCALE MRNA]</scope>
    <source>
        <strain>cv. Columbia</strain>
    </source>
</reference>
<reference key="6">
    <citation type="journal article" date="2008" name="BMC Plant Biol.">
        <title>Ornithine-delta-aminotransferase is essential for arginine catabolism but not for proline biosynthesis.</title>
        <authorList>
            <person name="Funck D."/>
            <person name="Stadelhofer B."/>
            <person name="Koch W."/>
        </authorList>
    </citation>
    <scope>SUBCELLULAR LOCATION</scope>
    <scope>FUNCTION</scope>
    <scope>DISRUPTION PHENOTYPE</scope>
</reference>
<reference key="7">
    <citation type="journal article" date="2010" name="Plant Cell Environ.">
        <title>Mechanisms independent of abscisic acid (ABA) or proline feedback have a predominant role in transcriptional regulation of proline metabolism during low water potential and stress recovery.</title>
        <authorList>
            <person name="Sharma S."/>
            <person name="Verslues P.E."/>
        </authorList>
    </citation>
    <scope>INDUCTION</scope>
</reference>
<reference key="8">
    <citation type="journal article" date="2012" name="Plant Cell Environ.">
        <title>Ornithine-delta-aminotransferase and proline dehydrogenase genes play a role in non-host disease resistance by regulating pyrroline-5-carboxylate metabolism-induced hypersensitive response.</title>
        <authorList>
            <person name="Senthil-Kumar M."/>
            <person name="Mysore K.S."/>
        </authorList>
    </citation>
    <scope>FUNCTION</scope>
    <scope>DISRUPTION PHENOTYPE</scope>
    <scope>INDUCTION BY AVIRULENT PATHOGEN</scope>
</reference>
<gene>
    <name evidence="9" type="primary">DELTA-OAT</name>
    <name evidence="11" type="ordered locus">At5g46180</name>
    <name evidence="12" type="ORF">MCL19.24</name>
</gene>
<evidence type="ECO:0000250" key="1">
    <source>
        <dbReference type="UniProtKB" id="P22256"/>
    </source>
</evidence>
<evidence type="ECO:0000250" key="2">
    <source>
        <dbReference type="UniProtKB" id="Q5SHH5"/>
    </source>
</evidence>
<evidence type="ECO:0000255" key="3"/>
<evidence type="ECO:0000256" key="4">
    <source>
        <dbReference type="SAM" id="MobiDB-lite"/>
    </source>
</evidence>
<evidence type="ECO:0000269" key="5">
    <source>
    </source>
</evidence>
<evidence type="ECO:0000269" key="6">
    <source>
    </source>
</evidence>
<evidence type="ECO:0000269" key="7">
    <source>
    </source>
</evidence>
<evidence type="ECO:0000269" key="8">
    <source>
    </source>
</evidence>
<evidence type="ECO:0000303" key="9">
    <source>
    </source>
</evidence>
<evidence type="ECO:0000305" key="10"/>
<evidence type="ECO:0000312" key="11">
    <source>
        <dbReference type="Araport" id="AT5G46180"/>
    </source>
</evidence>
<evidence type="ECO:0000312" key="12">
    <source>
        <dbReference type="EMBL" id="BAB08263.1"/>
    </source>
</evidence>
<comment type="function">
    <text evidence="5 7">Mediates degradation of arginine for nitrogen recycling. Plays a role in non-host disease resistance by regulating pyrroline-5-carboxylate metabolism-induced hypersensitive response.</text>
</comment>
<comment type="catalytic activity">
    <reaction evidence="8">
        <text>a 2-oxocarboxylate + L-ornithine = L-glutamate 5-semialdehyde + an L-alpha-amino acid</text>
        <dbReference type="Rhea" id="RHEA:13877"/>
        <dbReference type="ChEBI" id="CHEBI:35179"/>
        <dbReference type="ChEBI" id="CHEBI:46911"/>
        <dbReference type="ChEBI" id="CHEBI:58066"/>
        <dbReference type="ChEBI" id="CHEBI:59869"/>
        <dbReference type="EC" id="2.6.1.13"/>
    </reaction>
</comment>
<comment type="cofactor">
    <cofactor evidence="2">
        <name>pyridoxal 5'-phosphate</name>
        <dbReference type="ChEBI" id="CHEBI:597326"/>
    </cofactor>
</comment>
<comment type="biophysicochemical properties">
    <kinetics>
        <KM evidence="8">91 mM for L-ornithine</KM>
        <Vmax evidence="8">28.0 umol/h/mg enzyme toward L-glutamate 5-semialdehyde</Vmax>
        <text evidence="8">The activity was enhanced in young plants under salt-stress conditions.</text>
    </kinetics>
</comment>
<comment type="pathway">
    <text evidence="8">Amino-acid biosynthesis; L-proline biosynthesis; L-glutamate 5-semialdehyde from L-ornithine: step 1/1.</text>
</comment>
<comment type="subunit">
    <text evidence="1">Homotetramer.</text>
</comment>
<comment type="subcellular location">
    <subcellularLocation>
        <location evidence="5">Mitochondrion matrix</location>
    </subcellularLocation>
</comment>
<comment type="induction">
    <text evidence="6 7 8">By salt stress in young plants. Up-regulated during low water potential. Induced upon non-host pathogen infection.</text>
</comment>
<comment type="disruption phenotype">
    <text evidence="5 7">Unable to use arginine or ornithine as nitrogen source. Displays sensitivity against type II non-host pathogen infection.</text>
</comment>
<comment type="similarity">
    <text evidence="10">Belongs to the class-III pyridoxal-phosphate-dependent aminotransferase family.</text>
</comment>
<proteinExistence type="evidence at protein level"/>
<dbReference type="EC" id="2.6.1.13" evidence="8"/>
<dbReference type="EMBL" id="AB006698">
    <property type="protein sequence ID" value="BAB08263.1"/>
    <property type="molecule type" value="Genomic_DNA"/>
</dbReference>
<dbReference type="EMBL" id="CP002688">
    <property type="protein sequence ID" value="AED95350.1"/>
    <property type="molecule type" value="Genomic_DNA"/>
</dbReference>
<dbReference type="EMBL" id="BT023421">
    <property type="protein sequence ID" value="AAY56412.1"/>
    <property type="molecule type" value="mRNA"/>
</dbReference>
<dbReference type="EMBL" id="BT029160">
    <property type="protein sequence ID" value="ABJ17095.1"/>
    <property type="molecule type" value="mRNA"/>
</dbReference>
<dbReference type="RefSeq" id="NP_199430.1">
    <property type="nucleotide sequence ID" value="NM_123987.4"/>
</dbReference>
<dbReference type="SMR" id="Q9FNK4"/>
<dbReference type="FunCoup" id="Q9FNK4">
    <property type="interactions" value="2856"/>
</dbReference>
<dbReference type="STRING" id="3702.Q9FNK4"/>
<dbReference type="iPTMnet" id="Q9FNK4"/>
<dbReference type="SwissPalm" id="Q9FNK4"/>
<dbReference type="PaxDb" id="3702-AT5G46180.1"/>
<dbReference type="ProteomicsDB" id="239074"/>
<dbReference type="EnsemblPlants" id="AT5G46180.1">
    <property type="protein sequence ID" value="AT5G46180.1"/>
    <property type="gene ID" value="AT5G46180"/>
</dbReference>
<dbReference type="GeneID" id="834660"/>
<dbReference type="Gramene" id="AT5G46180.1">
    <property type="protein sequence ID" value="AT5G46180.1"/>
    <property type="gene ID" value="AT5G46180"/>
</dbReference>
<dbReference type="KEGG" id="ath:AT5G46180"/>
<dbReference type="Araport" id="AT5G46180"/>
<dbReference type="TAIR" id="AT5G46180">
    <property type="gene designation" value="DELTA-OAT"/>
</dbReference>
<dbReference type="eggNOG" id="KOG1402">
    <property type="taxonomic scope" value="Eukaryota"/>
</dbReference>
<dbReference type="HOGENOM" id="CLU_016922_10_3_1"/>
<dbReference type="InParanoid" id="Q9FNK4"/>
<dbReference type="OMA" id="VCEGNFH"/>
<dbReference type="PhylomeDB" id="Q9FNK4"/>
<dbReference type="BioCyc" id="ARA:AT5G46180-MONOMER"/>
<dbReference type="BioCyc" id="MetaCyc:AT5G46180-MONOMER"/>
<dbReference type="BRENDA" id="2.6.1.13">
    <property type="organism ID" value="399"/>
</dbReference>
<dbReference type="SABIO-RK" id="Q9FNK4"/>
<dbReference type="UniPathway" id="UPA00098">
    <property type="reaction ID" value="UER00358"/>
</dbReference>
<dbReference type="PRO" id="PR:Q9FNK4"/>
<dbReference type="Proteomes" id="UP000006548">
    <property type="component" value="Chromosome 5"/>
</dbReference>
<dbReference type="ExpressionAtlas" id="Q9FNK4">
    <property type="expression patterns" value="baseline and differential"/>
</dbReference>
<dbReference type="GO" id="GO:0005759">
    <property type="term" value="C:mitochondrial matrix"/>
    <property type="evidence" value="ECO:0007669"/>
    <property type="project" value="UniProtKB-SubCell"/>
</dbReference>
<dbReference type="GO" id="GO:0005739">
    <property type="term" value="C:mitochondrion"/>
    <property type="evidence" value="ECO:0000314"/>
    <property type="project" value="TAIR"/>
</dbReference>
<dbReference type="GO" id="GO:0009536">
    <property type="term" value="C:plastid"/>
    <property type="evidence" value="ECO:0007005"/>
    <property type="project" value="TAIR"/>
</dbReference>
<dbReference type="GO" id="GO:0004587">
    <property type="term" value="F:ornithine aminotransferase activity"/>
    <property type="evidence" value="ECO:0000314"/>
    <property type="project" value="UniProtKB"/>
</dbReference>
<dbReference type="GO" id="GO:0030170">
    <property type="term" value="F:pyridoxal phosphate binding"/>
    <property type="evidence" value="ECO:0007669"/>
    <property type="project" value="InterPro"/>
</dbReference>
<dbReference type="GO" id="GO:0008270">
    <property type="term" value="F:zinc ion binding"/>
    <property type="evidence" value="ECO:0007005"/>
    <property type="project" value="TAIR"/>
</dbReference>
<dbReference type="GO" id="GO:0019544">
    <property type="term" value="P:arginine catabolic process to glutamate"/>
    <property type="evidence" value="ECO:0000315"/>
    <property type="project" value="TAIR"/>
</dbReference>
<dbReference type="GO" id="GO:0042742">
    <property type="term" value="P:defense response to bacterium"/>
    <property type="evidence" value="ECO:0000270"/>
    <property type="project" value="UniProtKB"/>
</dbReference>
<dbReference type="GO" id="GO:0042538">
    <property type="term" value="P:hyperosmotic salinity response"/>
    <property type="evidence" value="ECO:0000314"/>
    <property type="project" value="TAIR"/>
</dbReference>
<dbReference type="GO" id="GO:0051646">
    <property type="term" value="P:mitochondrion localization"/>
    <property type="evidence" value="ECO:0000314"/>
    <property type="project" value="CACAO"/>
</dbReference>
<dbReference type="GO" id="GO:0006593">
    <property type="term" value="P:ornithine catabolic process"/>
    <property type="evidence" value="ECO:0000314"/>
    <property type="project" value="UniProtKB"/>
</dbReference>
<dbReference type="GO" id="GO:0009626">
    <property type="term" value="P:plant-type hypersensitive response"/>
    <property type="evidence" value="ECO:0000304"/>
    <property type="project" value="UniProtKB"/>
</dbReference>
<dbReference type="GO" id="GO:0006561">
    <property type="term" value="P:proline biosynthetic process"/>
    <property type="evidence" value="ECO:0000314"/>
    <property type="project" value="TAIR"/>
</dbReference>
<dbReference type="GO" id="GO:0009651">
    <property type="term" value="P:response to salt stress"/>
    <property type="evidence" value="ECO:0000314"/>
    <property type="project" value="UniProtKB"/>
</dbReference>
<dbReference type="CDD" id="cd00610">
    <property type="entry name" value="OAT_like"/>
    <property type="match status" value="1"/>
</dbReference>
<dbReference type="FunFam" id="3.40.640.10:FF:000011">
    <property type="entry name" value="Ornithine aminotransferase"/>
    <property type="match status" value="1"/>
</dbReference>
<dbReference type="FunFam" id="3.90.1150.10:FF:000152">
    <property type="entry name" value="Ornithine aminotransferase"/>
    <property type="match status" value="1"/>
</dbReference>
<dbReference type="Gene3D" id="3.90.1150.10">
    <property type="entry name" value="Aspartate Aminotransferase, domain 1"/>
    <property type="match status" value="1"/>
</dbReference>
<dbReference type="Gene3D" id="3.40.640.10">
    <property type="entry name" value="Type I PLP-dependent aspartate aminotransferase-like (Major domain)"/>
    <property type="match status" value="1"/>
</dbReference>
<dbReference type="InterPro" id="IPR005814">
    <property type="entry name" value="Aminotrans_3"/>
</dbReference>
<dbReference type="InterPro" id="IPR049704">
    <property type="entry name" value="Aminotrans_3_PPA_site"/>
</dbReference>
<dbReference type="InterPro" id="IPR050103">
    <property type="entry name" value="Class-III_PLP-dep_AT"/>
</dbReference>
<dbReference type="InterPro" id="IPR010164">
    <property type="entry name" value="Orn_aminotrans"/>
</dbReference>
<dbReference type="InterPro" id="IPR015424">
    <property type="entry name" value="PyrdxlP-dep_Trfase"/>
</dbReference>
<dbReference type="InterPro" id="IPR015421">
    <property type="entry name" value="PyrdxlP-dep_Trfase_major"/>
</dbReference>
<dbReference type="InterPro" id="IPR015422">
    <property type="entry name" value="PyrdxlP-dep_Trfase_small"/>
</dbReference>
<dbReference type="NCBIfam" id="TIGR01885">
    <property type="entry name" value="Orn_aminotrans"/>
    <property type="match status" value="1"/>
</dbReference>
<dbReference type="PANTHER" id="PTHR11986">
    <property type="entry name" value="AMINOTRANSFERASE CLASS III"/>
    <property type="match status" value="1"/>
</dbReference>
<dbReference type="PANTHER" id="PTHR11986:SF18">
    <property type="entry name" value="ORNITHINE AMINOTRANSFERASE, MITOCHONDRIAL"/>
    <property type="match status" value="1"/>
</dbReference>
<dbReference type="Pfam" id="PF00202">
    <property type="entry name" value="Aminotran_3"/>
    <property type="match status" value="1"/>
</dbReference>
<dbReference type="PIRSF" id="PIRSF000521">
    <property type="entry name" value="Transaminase_4ab_Lys_Orn"/>
    <property type="match status" value="1"/>
</dbReference>
<dbReference type="SUPFAM" id="SSF53383">
    <property type="entry name" value="PLP-dependent transferases"/>
    <property type="match status" value="1"/>
</dbReference>
<dbReference type="PROSITE" id="PS00600">
    <property type="entry name" value="AA_TRANSFER_CLASS_3"/>
    <property type="match status" value="1"/>
</dbReference>
<sequence>MAATTRRLLYYVSKRFSTAGVRRSYGGLPQSNSKSPPSSSQRLMELESEFSAHNYHPVPVVFSRANGSTIWDPEGKRYIDFLAAYSAVNQGHCHPKIMKALQEQVEKLTLSSRAFYNDKFPVFAERLTNMFGYDMVLPMNTGAEGVETALKLARKWGHEKKNIPKDEAIIVSCCGCFHGRTLAIVSMSCDNDATRGFGPLLPGNLKVDFGDADSLEKIFKEKGDRIAGFLFEPIQGEAGVIIPPDGYLKAVRELCTKYNVLMIADEVQSGLARSGKMLACDWEEIRPDMVILGKALGGGVIPVSAVLADKDVMLHIKPGQHGSTFGGNPLASAVAMASLDVIVEEKLVERSASLGEELRIQLNEIKKQFPKYIKEVRGRGLFNAIEFNSESLSPVSAYDICLSLKERGVLAKPTHNTIVRLTPPLSISSDELRDGSEALHDVLELDLPNLLKINSGKTPVSHITECDRCGRNLYA</sequence>
<feature type="transit peptide" description="Mitochondrion" evidence="3">
    <location>
        <begin position="1"/>
        <end position="16"/>
    </location>
</feature>
<feature type="chain" id="PRO_0000421298" description="Ornithine aminotransferase, mitochondrial">
    <location>
        <begin position="17"/>
        <end position="475"/>
    </location>
</feature>
<feature type="region of interest" description="Disordered" evidence="4">
    <location>
        <begin position="23"/>
        <end position="43"/>
    </location>
</feature>
<feature type="compositionally biased region" description="Low complexity" evidence="4">
    <location>
        <begin position="29"/>
        <end position="41"/>
    </location>
</feature>
<feature type="binding site" evidence="2">
    <location>
        <begin position="142"/>
        <end position="143"/>
    </location>
    <ligand>
        <name>pyridoxal 5'-phosphate</name>
        <dbReference type="ChEBI" id="CHEBI:597326"/>
    </ligand>
</feature>
<feature type="binding site" evidence="2">
    <location>
        <position position="177"/>
    </location>
    <ligand>
        <name>pyridoxal 5'-phosphate</name>
        <dbReference type="ChEBI" id="CHEBI:597326"/>
    </ligand>
</feature>
<feature type="binding site" evidence="2">
    <location>
        <position position="180"/>
    </location>
    <ligand>
        <name>L-ornithine</name>
        <dbReference type="ChEBI" id="CHEBI:46911"/>
    </ligand>
</feature>
<feature type="binding site" evidence="2">
    <location>
        <begin position="265"/>
        <end position="268"/>
    </location>
    <ligand>
        <name>pyridoxal 5'-phosphate</name>
        <dbReference type="ChEBI" id="CHEBI:597326"/>
    </ligand>
</feature>
<feature type="binding site" evidence="2">
    <location>
        <position position="323"/>
    </location>
    <ligand>
        <name>L-ornithine</name>
        <dbReference type="ChEBI" id="CHEBI:46911"/>
    </ligand>
</feature>
<feature type="binding site" evidence="2">
    <location>
        <position position="324"/>
    </location>
    <ligand>
        <name>pyridoxal 5'-phosphate</name>
        <dbReference type="ChEBI" id="CHEBI:597326"/>
    </ligand>
</feature>
<feature type="modified residue" description="N6-(pyridoxal phosphate)lysine" evidence="2">
    <location>
        <position position="294"/>
    </location>
</feature>
<keyword id="KW-0032">Aminotransferase</keyword>
<keyword id="KW-0496">Mitochondrion</keyword>
<keyword id="KW-0611">Plant defense</keyword>
<keyword id="KW-0663">Pyridoxal phosphate</keyword>
<keyword id="KW-1185">Reference proteome</keyword>
<keyword id="KW-0808">Transferase</keyword>
<keyword id="KW-0809">Transit peptide</keyword>
<organism>
    <name type="scientific">Arabidopsis thaliana</name>
    <name type="common">Mouse-ear cress</name>
    <dbReference type="NCBI Taxonomy" id="3702"/>
    <lineage>
        <taxon>Eukaryota</taxon>
        <taxon>Viridiplantae</taxon>
        <taxon>Streptophyta</taxon>
        <taxon>Embryophyta</taxon>
        <taxon>Tracheophyta</taxon>
        <taxon>Spermatophyta</taxon>
        <taxon>Magnoliopsida</taxon>
        <taxon>eudicotyledons</taxon>
        <taxon>Gunneridae</taxon>
        <taxon>Pentapetalae</taxon>
        <taxon>rosids</taxon>
        <taxon>malvids</taxon>
        <taxon>Brassicales</taxon>
        <taxon>Brassicaceae</taxon>
        <taxon>Camelineae</taxon>
        <taxon>Arabidopsis</taxon>
    </lineage>
</organism>
<protein>
    <recommendedName>
        <fullName evidence="9">Ornithine aminotransferase, mitochondrial</fullName>
        <ecNumber evidence="8">2.6.1.13</ecNumber>
    </recommendedName>
    <alternativeName>
        <fullName evidence="9">Ornithine delta-aminotransferase</fullName>
    </alternativeName>
    <alternativeName>
        <fullName evidence="9">Ornithine--oxo-acid aminotransferase</fullName>
    </alternativeName>
</protein>